<evidence type="ECO:0000255" key="1">
    <source>
        <dbReference type="HAMAP-Rule" id="MF_01554"/>
    </source>
</evidence>
<keyword id="KW-0413">Isomerase</keyword>
<keyword id="KW-0460">Magnesium</keyword>
<keyword id="KW-0479">Metal-binding</keyword>
<keyword id="KW-0597">Phosphoprotein</keyword>
<dbReference type="EC" id="5.4.2.10" evidence="1"/>
<dbReference type="EMBL" id="CP000359">
    <property type="protein sequence ID" value="ABF45959.1"/>
    <property type="molecule type" value="Genomic_DNA"/>
</dbReference>
<dbReference type="RefSeq" id="WP_011530792.1">
    <property type="nucleotide sequence ID" value="NC_008025.1"/>
</dbReference>
<dbReference type="SMR" id="Q1IXS5"/>
<dbReference type="STRING" id="319795.Dgeo_1664"/>
<dbReference type="KEGG" id="dge:Dgeo_1664"/>
<dbReference type="eggNOG" id="COG1109">
    <property type="taxonomic scope" value="Bacteria"/>
</dbReference>
<dbReference type="HOGENOM" id="CLU_016950_7_0_0"/>
<dbReference type="Proteomes" id="UP000002431">
    <property type="component" value="Chromosome"/>
</dbReference>
<dbReference type="GO" id="GO:0005829">
    <property type="term" value="C:cytosol"/>
    <property type="evidence" value="ECO:0007669"/>
    <property type="project" value="TreeGrafter"/>
</dbReference>
<dbReference type="GO" id="GO:0000287">
    <property type="term" value="F:magnesium ion binding"/>
    <property type="evidence" value="ECO:0007669"/>
    <property type="project" value="UniProtKB-UniRule"/>
</dbReference>
<dbReference type="GO" id="GO:0008966">
    <property type="term" value="F:phosphoglucosamine mutase activity"/>
    <property type="evidence" value="ECO:0007669"/>
    <property type="project" value="UniProtKB-UniRule"/>
</dbReference>
<dbReference type="GO" id="GO:0004615">
    <property type="term" value="F:phosphomannomutase activity"/>
    <property type="evidence" value="ECO:0007669"/>
    <property type="project" value="TreeGrafter"/>
</dbReference>
<dbReference type="GO" id="GO:0005975">
    <property type="term" value="P:carbohydrate metabolic process"/>
    <property type="evidence" value="ECO:0007669"/>
    <property type="project" value="InterPro"/>
</dbReference>
<dbReference type="GO" id="GO:0009252">
    <property type="term" value="P:peptidoglycan biosynthetic process"/>
    <property type="evidence" value="ECO:0007669"/>
    <property type="project" value="TreeGrafter"/>
</dbReference>
<dbReference type="GO" id="GO:0006048">
    <property type="term" value="P:UDP-N-acetylglucosamine biosynthetic process"/>
    <property type="evidence" value="ECO:0007669"/>
    <property type="project" value="TreeGrafter"/>
</dbReference>
<dbReference type="CDD" id="cd05802">
    <property type="entry name" value="GlmM"/>
    <property type="match status" value="1"/>
</dbReference>
<dbReference type="FunFam" id="3.30.310.50:FF:000001">
    <property type="entry name" value="Phosphoglucosamine mutase"/>
    <property type="match status" value="1"/>
</dbReference>
<dbReference type="FunFam" id="3.40.120.10:FF:000001">
    <property type="entry name" value="Phosphoglucosamine mutase"/>
    <property type="match status" value="1"/>
</dbReference>
<dbReference type="FunFam" id="3.40.120.10:FF:000003">
    <property type="entry name" value="Phosphoglucosamine mutase"/>
    <property type="match status" value="1"/>
</dbReference>
<dbReference type="Gene3D" id="3.40.120.10">
    <property type="entry name" value="Alpha-D-Glucose-1,6-Bisphosphate, subunit A, domain 3"/>
    <property type="match status" value="3"/>
</dbReference>
<dbReference type="Gene3D" id="3.30.310.50">
    <property type="entry name" value="Alpha-D-phosphohexomutase, C-terminal domain"/>
    <property type="match status" value="1"/>
</dbReference>
<dbReference type="HAMAP" id="MF_01554_B">
    <property type="entry name" value="GlmM_B"/>
    <property type="match status" value="1"/>
</dbReference>
<dbReference type="InterPro" id="IPR005844">
    <property type="entry name" value="A-D-PHexomutase_a/b/a-I"/>
</dbReference>
<dbReference type="InterPro" id="IPR016055">
    <property type="entry name" value="A-D-PHexomutase_a/b/a-I/II/III"/>
</dbReference>
<dbReference type="InterPro" id="IPR005845">
    <property type="entry name" value="A-D-PHexomutase_a/b/a-II"/>
</dbReference>
<dbReference type="InterPro" id="IPR005846">
    <property type="entry name" value="A-D-PHexomutase_a/b/a-III"/>
</dbReference>
<dbReference type="InterPro" id="IPR005843">
    <property type="entry name" value="A-D-PHexomutase_C"/>
</dbReference>
<dbReference type="InterPro" id="IPR036900">
    <property type="entry name" value="A-D-PHexomutase_C_sf"/>
</dbReference>
<dbReference type="InterPro" id="IPR016066">
    <property type="entry name" value="A-D-PHexomutase_CS"/>
</dbReference>
<dbReference type="InterPro" id="IPR005841">
    <property type="entry name" value="Alpha-D-phosphohexomutase_SF"/>
</dbReference>
<dbReference type="InterPro" id="IPR006352">
    <property type="entry name" value="GlmM_bact"/>
</dbReference>
<dbReference type="InterPro" id="IPR050060">
    <property type="entry name" value="Phosphoglucosamine_mutase"/>
</dbReference>
<dbReference type="NCBIfam" id="TIGR01455">
    <property type="entry name" value="glmM"/>
    <property type="match status" value="1"/>
</dbReference>
<dbReference type="NCBIfam" id="NF008139">
    <property type="entry name" value="PRK10887.1"/>
    <property type="match status" value="1"/>
</dbReference>
<dbReference type="PANTHER" id="PTHR42946:SF1">
    <property type="entry name" value="PHOSPHOGLUCOMUTASE (ALPHA-D-GLUCOSE-1,6-BISPHOSPHATE-DEPENDENT)"/>
    <property type="match status" value="1"/>
</dbReference>
<dbReference type="PANTHER" id="PTHR42946">
    <property type="entry name" value="PHOSPHOHEXOSE MUTASE"/>
    <property type="match status" value="1"/>
</dbReference>
<dbReference type="Pfam" id="PF02878">
    <property type="entry name" value="PGM_PMM_I"/>
    <property type="match status" value="1"/>
</dbReference>
<dbReference type="Pfam" id="PF02879">
    <property type="entry name" value="PGM_PMM_II"/>
    <property type="match status" value="1"/>
</dbReference>
<dbReference type="Pfam" id="PF02880">
    <property type="entry name" value="PGM_PMM_III"/>
    <property type="match status" value="1"/>
</dbReference>
<dbReference type="Pfam" id="PF00408">
    <property type="entry name" value="PGM_PMM_IV"/>
    <property type="match status" value="1"/>
</dbReference>
<dbReference type="PRINTS" id="PR00509">
    <property type="entry name" value="PGMPMM"/>
</dbReference>
<dbReference type="SUPFAM" id="SSF55957">
    <property type="entry name" value="Phosphoglucomutase, C-terminal domain"/>
    <property type="match status" value="1"/>
</dbReference>
<dbReference type="SUPFAM" id="SSF53738">
    <property type="entry name" value="Phosphoglucomutase, first 3 domains"/>
    <property type="match status" value="3"/>
</dbReference>
<dbReference type="PROSITE" id="PS00710">
    <property type="entry name" value="PGM_PMM"/>
    <property type="match status" value="1"/>
</dbReference>
<protein>
    <recommendedName>
        <fullName evidence="1">Phosphoglucosamine mutase</fullName>
        <ecNumber evidence="1">5.4.2.10</ecNumber>
    </recommendedName>
</protein>
<proteinExistence type="inferred from homology"/>
<organism>
    <name type="scientific">Deinococcus geothermalis (strain DSM 11300 / CIP 105573 / AG-3a)</name>
    <dbReference type="NCBI Taxonomy" id="319795"/>
    <lineage>
        <taxon>Bacteria</taxon>
        <taxon>Thermotogati</taxon>
        <taxon>Deinococcota</taxon>
        <taxon>Deinococci</taxon>
        <taxon>Deinococcales</taxon>
        <taxon>Deinococcaceae</taxon>
        <taxon>Deinococcus</taxon>
    </lineage>
</organism>
<reference key="1">
    <citation type="submission" date="2006-04" db="EMBL/GenBank/DDBJ databases">
        <title>Complete sequence of chromosome of Deinococcus geothermalis DSM 11300.</title>
        <authorList>
            <person name="Copeland A."/>
            <person name="Lucas S."/>
            <person name="Lapidus A."/>
            <person name="Barry K."/>
            <person name="Detter J.C."/>
            <person name="Glavina del Rio T."/>
            <person name="Hammon N."/>
            <person name="Israni S."/>
            <person name="Dalin E."/>
            <person name="Tice H."/>
            <person name="Pitluck S."/>
            <person name="Brettin T."/>
            <person name="Bruce D."/>
            <person name="Han C."/>
            <person name="Tapia R."/>
            <person name="Saunders E."/>
            <person name="Gilna P."/>
            <person name="Schmutz J."/>
            <person name="Larimer F."/>
            <person name="Land M."/>
            <person name="Hauser L."/>
            <person name="Kyrpides N."/>
            <person name="Kim E."/>
            <person name="Daly M.J."/>
            <person name="Fredrickson J.K."/>
            <person name="Makarova K.S."/>
            <person name="Gaidamakova E.K."/>
            <person name="Zhai M."/>
            <person name="Richardson P."/>
        </authorList>
    </citation>
    <scope>NUCLEOTIDE SEQUENCE [LARGE SCALE GENOMIC DNA]</scope>
    <source>
        <strain>DSM 11300 / CIP 105573 / AG-3a</strain>
    </source>
</reference>
<feature type="chain" id="PRO_0000301306" description="Phosphoglucosamine mutase">
    <location>
        <begin position="1"/>
        <end position="444"/>
    </location>
</feature>
<feature type="active site" description="Phosphoserine intermediate" evidence="1">
    <location>
        <position position="103"/>
    </location>
</feature>
<feature type="binding site" description="via phosphate group" evidence="1">
    <location>
        <position position="103"/>
    </location>
    <ligand>
        <name>Mg(2+)</name>
        <dbReference type="ChEBI" id="CHEBI:18420"/>
    </ligand>
</feature>
<feature type="binding site" evidence="1">
    <location>
        <position position="241"/>
    </location>
    <ligand>
        <name>Mg(2+)</name>
        <dbReference type="ChEBI" id="CHEBI:18420"/>
    </ligand>
</feature>
<feature type="binding site" evidence="1">
    <location>
        <position position="243"/>
    </location>
    <ligand>
        <name>Mg(2+)</name>
        <dbReference type="ChEBI" id="CHEBI:18420"/>
    </ligand>
</feature>
<feature type="binding site" evidence="1">
    <location>
        <position position="245"/>
    </location>
    <ligand>
        <name>Mg(2+)</name>
        <dbReference type="ChEBI" id="CHEBI:18420"/>
    </ligand>
</feature>
<feature type="modified residue" description="Phosphoserine" evidence="1">
    <location>
        <position position="103"/>
    </location>
</feature>
<accession>Q1IXS5</accession>
<comment type="function">
    <text evidence="1">Catalyzes the conversion of glucosamine-6-phosphate to glucosamine-1-phosphate.</text>
</comment>
<comment type="catalytic activity">
    <reaction evidence="1">
        <text>alpha-D-glucosamine 1-phosphate = D-glucosamine 6-phosphate</text>
        <dbReference type="Rhea" id="RHEA:23424"/>
        <dbReference type="ChEBI" id="CHEBI:58516"/>
        <dbReference type="ChEBI" id="CHEBI:58725"/>
        <dbReference type="EC" id="5.4.2.10"/>
    </reaction>
</comment>
<comment type="cofactor">
    <cofactor evidence="1">
        <name>Mg(2+)</name>
        <dbReference type="ChEBI" id="CHEBI:18420"/>
    </cofactor>
    <text evidence="1">Binds 1 Mg(2+) ion per subunit.</text>
</comment>
<comment type="PTM">
    <text evidence="1">Activated by phosphorylation.</text>
</comment>
<comment type="similarity">
    <text evidence="1">Belongs to the phosphohexose mutase family.</text>
</comment>
<sequence>MSERKYFGTDGVRAVAGEFPLTAGWVLNLGAAAGEVLKRRGERPSVVIGKDTRQSGDMLEAALAAGLTSRGVTVIHVGVLPTPGVSYLTRHLGADAGVVISASHNPYADNGIKFFGADGQKLTDATELAIEAAIDEVPNFAPVTGAALGSVTNYTEAERLYIQFLREHAPDLSGLKVAMDCANGAAYRVGPKVFQAAGADVFAVYTTPDGHNINRGCGSTHLEHLQRIVREGDYDLGVAFDGDADRALFVDSRGNVVHGDHMLLLNARARRDRAVVTTIMANMALEVKLREAGIPLERTAVGDRYVHERLHEQGLTLGGEQSGHVLFLDVAPTGDGVLTALLTLSAMKRLGTTLDELHDELVMFPQTLVNVRVGNKKAIARDEVVRAAVQEAEARLRGRGRVNLRPSGTENLIRVMVEGPDEAEIHEIARTLAGVVEKRGRVEV</sequence>
<gene>
    <name evidence="1" type="primary">glmM</name>
    <name type="ordered locus">Dgeo_1664</name>
</gene>
<name>GLMM_DEIGD</name>